<organism>
    <name type="scientific">Dehalococcoides mccartyi (strain ATCC BAA-2100 / JCM 16839 / KCTC 5957 / BAV1)</name>
    <dbReference type="NCBI Taxonomy" id="216389"/>
    <lineage>
        <taxon>Bacteria</taxon>
        <taxon>Bacillati</taxon>
        <taxon>Chloroflexota</taxon>
        <taxon>Dehalococcoidia</taxon>
        <taxon>Dehalococcoidales</taxon>
        <taxon>Dehalococcoidaceae</taxon>
        <taxon>Dehalococcoides</taxon>
    </lineage>
</organism>
<proteinExistence type="inferred from homology"/>
<comment type="function">
    <text evidence="1">Is required not only for elongation of protein synthesis but also for the initiation of all mRNA translation through initiator tRNA(fMet) aminoacylation.</text>
</comment>
<comment type="catalytic activity">
    <reaction evidence="1">
        <text>tRNA(Met) + L-methionine + ATP = L-methionyl-tRNA(Met) + AMP + diphosphate</text>
        <dbReference type="Rhea" id="RHEA:13481"/>
        <dbReference type="Rhea" id="RHEA-COMP:9667"/>
        <dbReference type="Rhea" id="RHEA-COMP:9698"/>
        <dbReference type="ChEBI" id="CHEBI:30616"/>
        <dbReference type="ChEBI" id="CHEBI:33019"/>
        <dbReference type="ChEBI" id="CHEBI:57844"/>
        <dbReference type="ChEBI" id="CHEBI:78442"/>
        <dbReference type="ChEBI" id="CHEBI:78530"/>
        <dbReference type="ChEBI" id="CHEBI:456215"/>
        <dbReference type="EC" id="6.1.1.10"/>
    </reaction>
</comment>
<comment type="cofactor">
    <cofactor evidence="1">
        <name>Zn(2+)</name>
        <dbReference type="ChEBI" id="CHEBI:29105"/>
    </cofactor>
    <text evidence="1">Binds 1 zinc ion per subunit.</text>
</comment>
<comment type="subunit">
    <text evidence="1">Monomer.</text>
</comment>
<comment type="subcellular location">
    <subcellularLocation>
        <location evidence="1">Cytoplasm</location>
    </subcellularLocation>
</comment>
<comment type="similarity">
    <text evidence="1">Belongs to the class-I aminoacyl-tRNA synthetase family. MetG type 1 subfamily.</text>
</comment>
<keyword id="KW-0030">Aminoacyl-tRNA synthetase</keyword>
<keyword id="KW-0067">ATP-binding</keyword>
<keyword id="KW-0963">Cytoplasm</keyword>
<keyword id="KW-0436">Ligase</keyword>
<keyword id="KW-0479">Metal-binding</keyword>
<keyword id="KW-0547">Nucleotide-binding</keyword>
<keyword id="KW-0648">Protein biosynthesis</keyword>
<keyword id="KW-0862">Zinc</keyword>
<sequence length="553" mass="63331">MSERIFIGVAWPYANSQLHLGHVAGAYLPADIFARYHRTRGDEVLMVSGSDMHGTPITIRAEQEGITAAEVAERYHQRFMASWPKLGISWDFYTSTATANHARTAQEMFLSLYEKGYIYKNTVCQPFCSHCNRFLPDRYVEGTCPHCKYEGARGDQCDNCGKPLNAAELLNFRCKNCGNPPEFRETEHFFLKLSAFEEELIRWVETKTHWRTNVLNFTLRYLKEGLKDRAITRDLDWGVPLPLPGYEGKRLYVWFEAVIGYLSASKEWAASKGQPNAWQKYWGVDTKSYYFIGKDNIPFHTIIWPAMLMGKGGLNLPYDVPSNEYLTTESQKFSKSRNNAIWVDDVLSRYGVDTLRYLLSANMPESSDTDFSWREFVRRNNDELVATYGNLAQRVLTMVCRNYDNKVPEYGELDERSLTLIEKTAAMLCETDKALYNCNFREAIRLAMALAQEANRYLDEKAPWKEIKVDKAAAARSLYVAMVALSGLRVAFYPFLPESSGRLSTYLGFGSELEKEGWILKMPVVGQELTPPEPLFKKLEDSVVEEETARMGL</sequence>
<protein>
    <recommendedName>
        <fullName evidence="1">Methionine--tRNA ligase</fullName>
        <ecNumber evidence="1">6.1.1.10</ecNumber>
    </recommendedName>
    <alternativeName>
        <fullName evidence="1">Methionyl-tRNA synthetase</fullName>
        <shortName evidence="1">MetRS</shortName>
    </alternativeName>
</protein>
<dbReference type="EC" id="6.1.1.10" evidence="1"/>
<dbReference type="EMBL" id="CP000688">
    <property type="protein sequence ID" value="ABQ16953.1"/>
    <property type="molecule type" value="Genomic_DNA"/>
</dbReference>
<dbReference type="SMR" id="A5FS74"/>
<dbReference type="KEGG" id="deb:DehaBAV1_0368"/>
<dbReference type="PATRIC" id="fig|216389.18.peg.408"/>
<dbReference type="HOGENOM" id="CLU_009710_1_2_0"/>
<dbReference type="GO" id="GO:0005829">
    <property type="term" value="C:cytosol"/>
    <property type="evidence" value="ECO:0007669"/>
    <property type="project" value="TreeGrafter"/>
</dbReference>
<dbReference type="GO" id="GO:0005524">
    <property type="term" value="F:ATP binding"/>
    <property type="evidence" value="ECO:0007669"/>
    <property type="project" value="UniProtKB-UniRule"/>
</dbReference>
<dbReference type="GO" id="GO:0046872">
    <property type="term" value="F:metal ion binding"/>
    <property type="evidence" value="ECO:0007669"/>
    <property type="project" value="UniProtKB-KW"/>
</dbReference>
<dbReference type="GO" id="GO:0004825">
    <property type="term" value="F:methionine-tRNA ligase activity"/>
    <property type="evidence" value="ECO:0007669"/>
    <property type="project" value="UniProtKB-UniRule"/>
</dbReference>
<dbReference type="GO" id="GO:0006431">
    <property type="term" value="P:methionyl-tRNA aminoacylation"/>
    <property type="evidence" value="ECO:0007669"/>
    <property type="project" value="UniProtKB-UniRule"/>
</dbReference>
<dbReference type="CDD" id="cd07957">
    <property type="entry name" value="Anticodon_Ia_Met"/>
    <property type="match status" value="1"/>
</dbReference>
<dbReference type="CDD" id="cd00814">
    <property type="entry name" value="MetRS_core"/>
    <property type="match status" value="1"/>
</dbReference>
<dbReference type="FunFam" id="2.20.28.20:FF:000001">
    <property type="entry name" value="Methionine--tRNA ligase"/>
    <property type="match status" value="1"/>
</dbReference>
<dbReference type="Gene3D" id="3.40.50.620">
    <property type="entry name" value="HUPs"/>
    <property type="match status" value="1"/>
</dbReference>
<dbReference type="Gene3D" id="1.10.730.10">
    <property type="entry name" value="Isoleucyl-tRNA Synthetase, Domain 1"/>
    <property type="match status" value="1"/>
</dbReference>
<dbReference type="Gene3D" id="2.20.28.20">
    <property type="entry name" value="Methionyl-tRNA synthetase, Zn-domain"/>
    <property type="match status" value="1"/>
</dbReference>
<dbReference type="HAMAP" id="MF_00098">
    <property type="entry name" value="Met_tRNA_synth_type1"/>
    <property type="match status" value="1"/>
</dbReference>
<dbReference type="InterPro" id="IPR041872">
    <property type="entry name" value="Anticodon_Met"/>
</dbReference>
<dbReference type="InterPro" id="IPR023458">
    <property type="entry name" value="Met-tRNA_ligase_1"/>
</dbReference>
<dbReference type="InterPro" id="IPR014758">
    <property type="entry name" value="Met-tRNA_synth"/>
</dbReference>
<dbReference type="InterPro" id="IPR015413">
    <property type="entry name" value="Methionyl/Leucyl_tRNA_Synth"/>
</dbReference>
<dbReference type="InterPro" id="IPR033911">
    <property type="entry name" value="MetRS_core"/>
</dbReference>
<dbReference type="InterPro" id="IPR029038">
    <property type="entry name" value="MetRS_Zn"/>
</dbReference>
<dbReference type="InterPro" id="IPR014729">
    <property type="entry name" value="Rossmann-like_a/b/a_fold"/>
</dbReference>
<dbReference type="InterPro" id="IPR009080">
    <property type="entry name" value="tRNAsynth_Ia_anticodon-bd"/>
</dbReference>
<dbReference type="NCBIfam" id="TIGR00398">
    <property type="entry name" value="metG"/>
    <property type="match status" value="1"/>
</dbReference>
<dbReference type="NCBIfam" id="NF001100">
    <property type="entry name" value="PRK00133.1"/>
    <property type="match status" value="1"/>
</dbReference>
<dbReference type="PANTHER" id="PTHR45765">
    <property type="entry name" value="METHIONINE--TRNA LIGASE"/>
    <property type="match status" value="1"/>
</dbReference>
<dbReference type="PANTHER" id="PTHR45765:SF1">
    <property type="entry name" value="METHIONINE--TRNA LIGASE, CYTOPLASMIC"/>
    <property type="match status" value="1"/>
</dbReference>
<dbReference type="Pfam" id="PF19303">
    <property type="entry name" value="Anticodon_3"/>
    <property type="match status" value="1"/>
</dbReference>
<dbReference type="Pfam" id="PF09334">
    <property type="entry name" value="tRNA-synt_1g"/>
    <property type="match status" value="1"/>
</dbReference>
<dbReference type="PRINTS" id="PR01041">
    <property type="entry name" value="TRNASYNTHMET"/>
</dbReference>
<dbReference type="SUPFAM" id="SSF47323">
    <property type="entry name" value="Anticodon-binding domain of a subclass of class I aminoacyl-tRNA synthetases"/>
    <property type="match status" value="1"/>
</dbReference>
<dbReference type="SUPFAM" id="SSF57770">
    <property type="entry name" value="Methionyl-tRNA synthetase (MetRS), Zn-domain"/>
    <property type="match status" value="1"/>
</dbReference>
<dbReference type="SUPFAM" id="SSF52374">
    <property type="entry name" value="Nucleotidylyl transferase"/>
    <property type="match status" value="1"/>
</dbReference>
<gene>
    <name evidence="1" type="primary">metG</name>
    <name type="ordered locus">DehaBAV1_0368</name>
</gene>
<reference key="1">
    <citation type="submission" date="2007-05" db="EMBL/GenBank/DDBJ databases">
        <title>Complete sequence of Dehalococcoides sp. BAV1.</title>
        <authorList>
            <consortium name="US DOE Joint Genome Institute"/>
            <person name="Copeland A."/>
            <person name="Lucas S."/>
            <person name="Lapidus A."/>
            <person name="Barry K."/>
            <person name="Detter J.C."/>
            <person name="Glavina del Rio T."/>
            <person name="Hammon N."/>
            <person name="Israni S."/>
            <person name="Pitluck S."/>
            <person name="Lowry S."/>
            <person name="Clum A."/>
            <person name="Schmutz J."/>
            <person name="Larimer F."/>
            <person name="Land M."/>
            <person name="Hauser L."/>
            <person name="Kyrpides N."/>
            <person name="Kim E."/>
            <person name="Ritalahti K.M."/>
            <person name="Loeffler F."/>
            <person name="Richardson P."/>
        </authorList>
    </citation>
    <scope>NUCLEOTIDE SEQUENCE [LARGE SCALE GENOMIC DNA]</scope>
    <source>
        <strain>ATCC BAA-2100 / JCM 16839 / KCTC 5957 / BAV1</strain>
    </source>
</reference>
<name>SYM_DEHMB</name>
<feature type="chain" id="PRO_0000331812" description="Methionine--tRNA ligase">
    <location>
        <begin position="1"/>
        <end position="553"/>
    </location>
</feature>
<feature type="short sequence motif" description="'HIGH' region">
    <location>
        <begin position="12"/>
        <end position="22"/>
    </location>
</feature>
<feature type="short sequence motif" description="'KMSKS' region">
    <location>
        <begin position="332"/>
        <end position="336"/>
    </location>
</feature>
<feature type="binding site" evidence="1">
    <location>
        <position position="144"/>
    </location>
    <ligand>
        <name>Zn(2+)</name>
        <dbReference type="ChEBI" id="CHEBI:29105"/>
    </ligand>
</feature>
<feature type="binding site" evidence="1">
    <location>
        <position position="147"/>
    </location>
    <ligand>
        <name>Zn(2+)</name>
        <dbReference type="ChEBI" id="CHEBI:29105"/>
    </ligand>
</feature>
<feature type="binding site" evidence="1">
    <location>
        <position position="157"/>
    </location>
    <ligand>
        <name>Zn(2+)</name>
        <dbReference type="ChEBI" id="CHEBI:29105"/>
    </ligand>
</feature>
<feature type="binding site" evidence="1">
    <location>
        <position position="160"/>
    </location>
    <ligand>
        <name>Zn(2+)</name>
        <dbReference type="ChEBI" id="CHEBI:29105"/>
    </ligand>
</feature>
<feature type="binding site" evidence="1">
    <location>
        <position position="335"/>
    </location>
    <ligand>
        <name>ATP</name>
        <dbReference type="ChEBI" id="CHEBI:30616"/>
    </ligand>
</feature>
<accession>A5FS74</accession>
<evidence type="ECO:0000255" key="1">
    <source>
        <dbReference type="HAMAP-Rule" id="MF_00098"/>
    </source>
</evidence>